<evidence type="ECO:0000269" key="1">
    <source>
    </source>
</evidence>
<evidence type="ECO:0000269" key="2">
    <source>
    </source>
</evidence>
<evidence type="ECO:0000303" key="3">
    <source>
    </source>
</evidence>
<evidence type="ECO:0000305" key="4"/>
<evidence type="ECO:0000305" key="5">
    <source>
    </source>
</evidence>
<evidence type="ECO:0000305" key="6">
    <source>
    </source>
</evidence>
<protein>
    <recommendedName>
        <fullName evidence="5">(2E)-enoyl-[ACP] glycyltransferase</fullName>
        <ecNumber evidence="1">4.3.2.11</ecNumber>
    </recommendedName>
    <alternativeName>
        <fullName evidence="5">(2E)-unsaturated fatty acyl-[ACP] glycyltransferase</fullName>
    </alternativeName>
</protein>
<accession>P0DX13</accession>
<feature type="chain" id="PRO_0000458129" description="(2E)-enoyl-[ACP] glycyltransferase">
    <location>
        <begin position="1"/>
        <end position="165"/>
    </location>
</feature>
<comment type="function">
    <text evidence="1 6">Involved in the biosynthesis of a unique class of isonitrile lipopeptides (INLPs). Catalyzes a Michael addition of glycine to the beta-position of an alpha,beta-unsaturated fatty acyl-[ACP], producing a (3R)-3-[(carboxymethyl)amino]fatty acid. Acts on the (2E)-butenoyl moiety loaded on the acyl-carrier protein ScoB, forming the product (3R)-3-[(carboxymethyl)amino]butanoate released from ScoB.</text>
</comment>
<comment type="catalytic activity">
    <reaction evidence="1 6">
        <text>a (3R)-3-[(carboxymethyl)amino]fatty acid + holo-[ACP] + H(+) = a (2E)-enoyl-[ACP] + glycine + H2O</text>
        <dbReference type="Rhea" id="RHEA:74923"/>
        <dbReference type="Rhea" id="RHEA-COMP:9685"/>
        <dbReference type="Rhea" id="RHEA-COMP:9925"/>
        <dbReference type="ChEBI" id="CHEBI:15377"/>
        <dbReference type="ChEBI" id="CHEBI:15378"/>
        <dbReference type="ChEBI" id="CHEBI:57305"/>
        <dbReference type="ChEBI" id="CHEBI:64479"/>
        <dbReference type="ChEBI" id="CHEBI:78784"/>
        <dbReference type="ChEBI" id="CHEBI:193080"/>
        <dbReference type="EC" id="4.3.2.11"/>
    </reaction>
    <physiologicalReaction direction="right-to-left" evidence="5">
        <dbReference type="Rhea" id="RHEA:74925"/>
    </physiologicalReaction>
</comment>
<comment type="catalytic activity">
    <reaction evidence="1 6">
        <text>(3R)-3-[(carboxymethyl)amino]butanoate + holo-[ACP] + H(+) = (2E)-butenoyl-[ACP] + glycine + H2O</text>
        <dbReference type="Rhea" id="RHEA:74927"/>
        <dbReference type="Rhea" id="RHEA-COMP:9627"/>
        <dbReference type="Rhea" id="RHEA-COMP:9685"/>
        <dbReference type="ChEBI" id="CHEBI:15377"/>
        <dbReference type="ChEBI" id="CHEBI:15378"/>
        <dbReference type="ChEBI" id="CHEBI:57305"/>
        <dbReference type="ChEBI" id="CHEBI:64479"/>
        <dbReference type="ChEBI" id="CHEBI:78453"/>
        <dbReference type="ChEBI" id="CHEBI:193081"/>
        <dbReference type="EC" id="4.3.2.11"/>
    </reaction>
    <physiologicalReaction direction="right-to-left" evidence="5">
        <dbReference type="Rhea" id="RHEA:74929"/>
    </physiologicalReaction>
</comment>
<comment type="similarity">
    <text evidence="4">Belongs to the FcoT family.</text>
</comment>
<comment type="caution">
    <text evidence="1 2">Was originally thought to produce an ACP-bound intermediate, but the next enzyme in the pathway (ScoE) was later shown to act only on a free acid substrate. That means the thioesterase activity of ScoD releases the product from the acyl-carrier protein after Michael addition.</text>
</comment>
<reference key="1">
    <citation type="journal article" date="2017" name="Proc. Natl. Acad. Sci. U.S.A.">
        <title>Biosynthesis of isonitrile lipopeptides by conserved nonribosomal peptide synthetase gene clusters in Actinobacteria.</title>
        <authorList>
            <person name="Harris N.C."/>
            <person name="Sato M."/>
            <person name="Herman N.A."/>
            <person name="Twigg F."/>
            <person name="Cai W."/>
            <person name="Liu J."/>
            <person name="Zhu X."/>
            <person name="Downey J."/>
            <person name="Khalaf R."/>
            <person name="Martin J."/>
            <person name="Koshino H."/>
            <person name="Zhang W."/>
        </authorList>
    </citation>
    <scope>NUCLEOTIDE SEQUENCE [GENOMIC DNA]</scope>
    <scope>FUNCTION</scope>
    <scope>CATALYTIC ACTIVITY</scope>
    <source>
        <strain>NRRL 18370</strain>
    </source>
</reference>
<reference key="2">
    <citation type="journal article" date="2018" name="Angew. Chem. Int. Ed. Engl.">
        <title>Isonitrile Formation by a Non-Heme Iron(II)-Dependent Oxidase/Decarboxylase.</title>
        <authorList>
            <person name="Harris N.C."/>
            <person name="Born D.A."/>
            <person name="Cai W."/>
            <person name="Huang Y."/>
            <person name="Martin J."/>
            <person name="Khalaf R."/>
            <person name="Drennan C.L."/>
            <person name="Zhang W."/>
        </authorList>
    </citation>
    <scope>FUNCTION</scope>
    <source>
        <strain>NRRL 18370</strain>
    </source>
</reference>
<gene>
    <name evidence="3" type="primary">scoD</name>
</gene>
<name>INLPD_STRC4</name>
<keyword id="KW-0276">Fatty acid metabolism</keyword>
<keyword id="KW-0443">Lipid metabolism</keyword>
<keyword id="KW-0456">Lyase</keyword>
<proteinExistence type="evidence at protein level"/>
<sequence length="165" mass="18721">MTDEALLTQVLMPYKDHCKYLRSAVVTETDGRASARCEFEIPESCYIDDTGHLNSVEVNICYNQMMYYLVAKSVKEGLGTGFESWTLEDFWKHQLPDILIARFSSNFRRPVNPRVFSGEMEFRSVTRRAPAGGSPFVHADTAFRYWDADAGRCDGEATLAFVNVP</sequence>
<organism>
    <name type="scientific">Streptomyces coeruleorubidus</name>
    <dbReference type="NCBI Taxonomy" id="116188"/>
    <lineage>
        <taxon>Bacteria</taxon>
        <taxon>Bacillati</taxon>
        <taxon>Actinomycetota</taxon>
        <taxon>Actinomycetes</taxon>
        <taxon>Kitasatosporales</taxon>
        <taxon>Streptomycetaceae</taxon>
        <taxon>Streptomyces</taxon>
    </lineage>
</organism>
<dbReference type="EC" id="4.3.2.11" evidence="1"/>
<dbReference type="EMBL" id="OL448874">
    <property type="protein sequence ID" value="UYZ56983.1"/>
    <property type="molecule type" value="Genomic_DNA"/>
</dbReference>
<dbReference type="SMR" id="P0DX13"/>
<dbReference type="GO" id="GO:0016829">
    <property type="term" value="F:lyase activity"/>
    <property type="evidence" value="ECO:0007669"/>
    <property type="project" value="UniProtKB-KW"/>
</dbReference>
<dbReference type="GO" id="GO:0006631">
    <property type="term" value="P:fatty acid metabolic process"/>
    <property type="evidence" value="ECO:0007669"/>
    <property type="project" value="UniProtKB-KW"/>
</dbReference>
<dbReference type="Gene3D" id="3.10.129.30">
    <property type="entry name" value="Rv0098, thioesterase-like hot dog domain"/>
    <property type="match status" value="1"/>
</dbReference>
<dbReference type="InterPro" id="IPR022598">
    <property type="entry name" value="FcoT_ThioEstase"/>
</dbReference>
<dbReference type="InterPro" id="IPR043064">
    <property type="entry name" value="FcoT_ThioEstase_Rv0098-like_sf"/>
</dbReference>
<dbReference type="Pfam" id="PF10862">
    <property type="entry name" value="FcoT"/>
    <property type="match status" value="1"/>
</dbReference>